<keyword id="KW-0032">Aminotransferase</keyword>
<keyword id="KW-1185">Reference proteome</keyword>
<keyword id="KW-0808">Transferase</keyword>
<comment type="function">
    <text evidence="1">The glycine cleavage system catalyzes the degradation of glycine.</text>
</comment>
<comment type="catalytic activity">
    <reaction evidence="1">
        <text>N(6)-[(R)-S(8)-aminomethyldihydrolipoyl]-L-lysyl-[protein] + (6S)-5,6,7,8-tetrahydrofolate = N(6)-[(R)-dihydrolipoyl]-L-lysyl-[protein] + (6R)-5,10-methylene-5,6,7,8-tetrahydrofolate + NH4(+)</text>
        <dbReference type="Rhea" id="RHEA:16945"/>
        <dbReference type="Rhea" id="RHEA-COMP:10475"/>
        <dbReference type="Rhea" id="RHEA-COMP:10492"/>
        <dbReference type="ChEBI" id="CHEBI:15636"/>
        <dbReference type="ChEBI" id="CHEBI:28938"/>
        <dbReference type="ChEBI" id="CHEBI:57453"/>
        <dbReference type="ChEBI" id="CHEBI:83100"/>
        <dbReference type="ChEBI" id="CHEBI:83143"/>
        <dbReference type="EC" id="2.1.2.10"/>
    </reaction>
</comment>
<comment type="subunit">
    <text evidence="1">The glycine cleavage system is composed of four proteins: P, T, L and H.</text>
</comment>
<comment type="similarity">
    <text evidence="1">Belongs to the GcvT family.</text>
</comment>
<proteinExistence type="inferred from homology"/>
<name>GCST_PARP8</name>
<reference key="1">
    <citation type="journal article" date="2014" name="Stand. Genomic Sci.">
        <title>Complete genome sequence of Burkholderia phymatum STM815(T), a broad host range and efficient nitrogen-fixing symbiont of Mimosa species.</title>
        <authorList>
            <person name="Moulin L."/>
            <person name="Klonowska A."/>
            <person name="Caroline B."/>
            <person name="Booth K."/>
            <person name="Vriezen J.A."/>
            <person name="Melkonian R."/>
            <person name="James E.K."/>
            <person name="Young J.P."/>
            <person name="Bena G."/>
            <person name="Hauser L."/>
            <person name="Land M."/>
            <person name="Kyrpides N."/>
            <person name="Bruce D."/>
            <person name="Chain P."/>
            <person name="Copeland A."/>
            <person name="Pitluck S."/>
            <person name="Woyke T."/>
            <person name="Lizotte-Waniewski M."/>
            <person name="Bristow J."/>
            <person name="Riley M."/>
        </authorList>
    </citation>
    <scope>NUCLEOTIDE SEQUENCE [LARGE SCALE GENOMIC DNA]</scope>
    <source>
        <strain>DSM 17167 / CIP 108236 / LMG 21445 / STM815</strain>
    </source>
</reference>
<accession>B2JJ71</accession>
<evidence type="ECO:0000255" key="1">
    <source>
        <dbReference type="HAMAP-Rule" id="MF_00259"/>
    </source>
</evidence>
<feature type="chain" id="PRO_1000114084" description="Aminomethyltransferase">
    <location>
        <begin position="1"/>
        <end position="372"/>
    </location>
</feature>
<dbReference type="EC" id="2.1.2.10" evidence="1"/>
<dbReference type="EMBL" id="CP001043">
    <property type="protein sequence ID" value="ACC72173.1"/>
    <property type="molecule type" value="Genomic_DNA"/>
</dbReference>
<dbReference type="RefSeq" id="WP_012402351.1">
    <property type="nucleotide sequence ID" value="NC_010622.1"/>
</dbReference>
<dbReference type="SMR" id="B2JJ71"/>
<dbReference type="STRING" id="391038.Bphy_3003"/>
<dbReference type="KEGG" id="bph:Bphy_3003"/>
<dbReference type="eggNOG" id="COG0404">
    <property type="taxonomic scope" value="Bacteria"/>
</dbReference>
<dbReference type="HOGENOM" id="CLU_007884_10_2_4"/>
<dbReference type="OrthoDB" id="9774591at2"/>
<dbReference type="Proteomes" id="UP000001192">
    <property type="component" value="Chromosome 1"/>
</dbReference>
<dbReference type="GO" id="GO:0005829">
    <property type="term" value="C:cytosol"/>
    <property type="evidence" value="ECO:0007669"/>
    <property type="project" value="TreeGrafter"/>
</dbReference>
<dbReference type="GO" id="GO:0005960">
    <property type="term" value="C:glycine cleavage complex"/>
    <property type="evidence" value="ECO:0007669"/>
    <property type="project" value="InterPro"/>
</dbReference>
<dbReference type="GO" id="GO:0004047">
    <property type="term" value="F:aminomethyltransferase activity"/>
    <property type="evidence" value="ECO:0007669"/>
    <property type="project" value="UniProtKB-UniRule"/>
</dbReference>
<dbReference type="GO" id="GO:0008483">
    <property type="term" value="F:transaminase activity"/>
    <property type="evidence" value="ECO:0007669"/>
    <property type="project" value="UniProtKB-KW"/>
</dbReference>
<dbReference type="GO" id="GO:0019464">
    <property type="term" value="P:glycine decarboxylation via glycine cleavage system"/>
    <property type="evidence" value="ECO:0007669"/>
    <property type="project" value="UniProtKB-UniRule"/>
</dbReference>
<dbReference type="FunFam" id="3.30.70.1400:FF:000001">
    <property type="entry name" value="Aminomethyltransferase"/>
    <property type="match status" value="1"/>
</dbReference>
<dbReference type="FunFam" id="4.10.1250.10:FF:000001">
    <property type="entry name" value="Aminomethyltransferase"/>
    <property type="match status" value="1"/>
</dbReference>
<dbReference type="Gene3D" id="2.40.30.110">
    <property type="entry name" value="Aminomethyltransferase beta-barrel domains"/>
    <property type="match status" value="1"/>
</dbReference>
<dbReference type="Gene3D" id="3.30.70.1400">
    <property type="entry name" value="Aminomethyltransferase beta-barrel domains"/>
    <property type="match status" value="1"/>
</dbReference>
<dbReference type="Gene3D" id="4.10.1250.10">
    <property type="entry name" value="Aminomethyltransferase fragment"/>
    <property type="match status" value="1"/>
</dbReference>
<dbReference type="Gene3D" id="3.30.1360.120">
    <property type="entry name" value="Probable tRNA modification gtpase trme, domain 1"/>
    <property type="match status" value="1"/>
</dbReference>
<dbReference type="HAMAP" id="MF_00259">
    <property type="entry name" value="GcvT"/>
    <property type="match status" value="1"/>
</dbReference>
<dbReference type="InterPro" id="IPR006223">
    <property type="entry name" value="GCS_T"/>
</dbReference>
<dbReference type="InterPro" id="IPR022903">
    <property type="entry name" value="GCS_T_bac"/>
</dbReference>
<dbReference type="InterPro" id="IPR013977">
    <property type="entry name" value="GCST_C"/>
</dbReference>
<dbReference type="InterPro" id="IPR006222">
    <property type="entry name" value="GCV_T_N"/>
</dbReference>
<dbReference type="InterPro" id="IPR028896">
    <property type="entry name" value="GcvT/YgfZ/DmdA"/>
</dbReference>
<dbReference type="InterPro" id="IPR029043">
    <property type="entry name" value="GcvT/YgfZ_C"/>
</dbReference>
<dbReference type="InterPro" id="IPR027266">
    <property type="entry name" value="TrmE/GcvT_dom1"/>
</dbReference>
<dbReference type="NCBIfam" id="TIGR00528">
    <property type="entry name" value="gcvT"/>
    <property type="match status" value="1"/>
</dbReference>
<dbReference type="NCBIfam" id="NF001567">
    <property type="entry name" value="PRK00389.1"/>
    <property type="match status" value="1"/>
</dbReference>
<dbReference type="PANTHER" id="PTHR43757">
    <property type="entry name" value="AMINOMETHYLTRANSFERASE"/>
    <property type="match status" value="1"/>
</dbReference>
<dbReference type="PANTHER" id="PTHR43757:SF2">
    <property type="entry name" value="AMINOMETHYLTRANSFERASE, MITOCHONDRIAL"/>
    <property type="match status" value="1"/>
</dbReference>
<dbReference type="Pfam" id="PF01571">
    <property type="entry name" value="GCV_T"/>
    <property type="match status" value="1"/>
</dbReference>
<dbReference type="Pfam" id="PF08669">
    <property type="entry name" value="GCV_T_C"/>
    <property type="match status" value="1"/>
</dbReference>
<dbReference type="PIRSF" id="PIRSF006487">
    <property type="entry name" value="GcvT"/>
    <property type="match status" value="1"/>
</dbReference>
<dbReference type="SUPFAM" id="SSF101790">
    <property type="entry name" value="Aminomethyltransferase beta-barrel domain"/>
    <property type="match status" value="1"/>
</dbReference>
<dbReference type="SUPFAM" id="SSF103025">
    <property type="entry name" value="Folate-binding domain"/>
    <property type="match status" value="1"/>
</dbReference>
<gene>
    <name evidence="1" type="primary">gcvT</name>
    <name type="ordered locus">Bphy_3003</name>
</gene>
<organism>
    <name type="scientific">Paraburkholderia phymatum (strain DSM 17167 / CIP 108236 / LMG 21445 / STM815)</name>
    <name type="common">Burkholderia phymatum</name>
    <dbReference type="NCBI Taxonomy" id="391038"/>
    <lineage>
        <taxon>Bacteria</taxon>
        <taxon>Pseudomonadati</taxon>
        <taxon>Pseudomonadota</taxon>
        <taxon>Betaproteobacteria</taxon>
        <taxon>Burkholderiales</taxon>
        <taxon>Burkholderiaceae</taxon>
        <taxon>Paraburkholderia</taxon>
    </lineage>
</organism>
<protein>
    <recommendedName>
        <fullName evidence="1">Aminomethyltransferase</fullName>
        <ecNumber evidence="1">2.1.2.10</ecNumber>
    </recommendedName>
    <alternativeName>
        <fullName evidence="1">Glycine cleavage system T protein</fullName>
    </alternativeName>
</protein>
<sequence>MTELKHTPLHATHRALNARMVDFGGWDMPVNYGSQIEEHRAVRTDAGMFDVSHMCVVDFTGERVRAFFERALANNVGKLQTAGKALYSCLLNPQGGVIDDLIVYYFGEDHFRVVVNAGTAEKDIAWFNKLNDEEGFGLTITPRRDYAIVAVQGPNAREKVWATVPHARAASEALKPFNAARVADTPFGELTVARTGYTGEDGFEIIVPAAHVEALWNALQAQGVRPAGLGARDTLRLEAGMNLYGQDMDDDVSPLDAGLAWTVDLSAPREFIGRAKLEADGSKQSFVGLILHKDNGKAAGVLRAHQKVVTPNGEGEITSGTFSPTMQESIAFARVPKGVQPGDVVHVQIRDKALPASVVKLPFVRNGKVLVG</sequence>